<name>GLYCO_DUVV</name>
<reference key="1">
    <citation type="journal article" date="2001" name="J. Virol.">
        <title>Evidence of two Lyssavirus phylogroups with distinct pathogenicity and immunogenicity.</title>
        <authorList>
            <person name="Badrane H."/>
            <person name="Bahloul C."/>
            <person name="Perrin P."/>
            <person name="Tordo N."/>
        </authorList>
    </citation>
    <scope>NUCLEOTIDE SEQUENCE [GENOMIC RNA]</scope>
</reference>
<reference key="2">
    <citation type="journal article" date="2002" name="Arch. Virol.">
        <title>Phylogenetic comparison of the genus Lyssavirus using distal coding sequences of the glycoprotein and nucleoprotein genes.</title>
        <authorList>
            <person name="Johnson N."/>
            <person name="McElhinney L.M."/>
            <person name="Smith J."/>
            <person name="Lowings P."/>
            <person name="Fooks A.R."/>
        </authorList>
    </citation>
    <scope>NUCLEOTIDE SEQUENCE [GENOMIC RNA] OF 77-214</scope>
    <source>
        <strain>Human/South Africa/Rv6</strain>
        <strain>Isolate Bat/South Africa/Rv139</strain>
        <strain>Isolate Bat/Zimbabwe/Rv131</strain>
    </source>
</reference>
<reference key="3">
    <citation type="submission" date="2017-06" db="EMBL/GenBank/DDBJ databases">
        <authorList>
            <person name="Johnson N."/>
            <person name="McElhinney L.M."/>
            <person name="Smith J."/>
            <person name="Lowings P."/>
            <person name="Fooks A.R."/>
        </authorList>
    </citation>
    <scope>SEQUENCE REVISION</scope>
    <source>
        <strain>Isolate Bat/South Africa/Rv139</strain>
        <strain>Isolate Bat/Zimbabwe/Rv131</strain>
    </source>
</reference>
<reference key="4">
    <citation type="journal article" date="2005" name="J. Virol.">
        <title>Phylogeography, population dynamics, and molecular evolution of European bat lyssaviruses.</title>
        <authorList>
            <person name="Davis P.L."/>
            <person name="Holmes E.C."/>
            <person name="Larrous F."/>
            <person name="Van der Poel W.H."/>
            <person name="Tjornehoj K."/>
            <person name="Alonso W.J."/>
            <person name="Bourhy H."/>
        </authorList>
    </citation>
    <scope>NUCLEOTIDE SEQUENCE [GENOMIC RNA] OF 1-524</scope>
    <source>
        <strain>94286.DUV</strain>
    </source>
</reference>
<keyword id="KW-0325">Glycoprotein</keyword>
<keyword id="KW-0449">Lipoprotein</keyword>
<keyword id="KW-0472">Membrane</keyword>
<keyword id="KW-0564">Palmitate</keyword>
<keyword id="KW-0732">Signal</keyword>
<keyword id="KW-0812">Transmembrane</keyword>
<keyword id="KW-1133">Transmembrane helix</keyword>
<keyword id="KW-0261">Viral envelope protein</keyword>
<keyword id="KW-0946">Virion</keyword>
<organism>
    <name type="scientific">Duvenhage virus</name>
    <name type="common">DUVV</name>
    <dbReference type="NCBI Taxonomy" id="38767"/>
    <lineage>
        <taxon>Viruses</taxon>
        <taxon>Riboviria</taxon>
        <taxon>Orthornavirae</taxon>
        <taxon>Negarnaviricota</taxon>
        <taxon>Haploviricotina</taxon>
        <taxon>Monjiviricetes</taxon>
        <taxon>Mononegavirales</taxon>
        <taxon>Rhabdoviridae</taxon>
        <taxon>Alpharhabdovirinae</taxon>
        <taxon>Lyssavirus</taxon>
    </lineage>
</organism>
<gene>
    <name type="primary">G</name>
</gene>
<sequence>MPLNAVIFTLLLRCSICLGKFPFYTIPDKLGPWSPIDIHHLSCPNNLVVEDEGCTTLTPFSYMELKVGYITSIKVSGFTCTGVVTEAETYTNFVGYVTTTFRRRHFRPSVNSCRDAYNWKIAGDPRYEESLHNPYPDSHWLRTVKTTKESLLIISPSVADMDAYDKKLYSKIVSNGRCSEISPGSPFCPTNHEYTIWMPESSNPGISCDIFTRSMGKKATKDGQLCGFVDERGLYKSLKGACRLRLCGISGLRLMDGSWVSLPQVNNSEWCSPDQLVNIHDFHSDEIEHLVADELVKKREDCLDALETILFTKSISFRRLSHLRKLVPGFGKAYTIINRTLMEAEAHYKSVREWKEIIPSKGCLKAGGRCYPHHNGIFFNGIILGPGGEILIPEMQSALLQQHIELLESSVVPLKHPLADPSTVFKNDDEAESFVDVHLPDTNQKISGIDLGLPEWKRYFLIGVSAVALLALSIIIAVCCKRFRKRKKSKPGPVELTRKVSVISKGNGPVPSWESYKEGTTGDVRNTTPSTRE</sequence>
<proteinExistence type="inferred from homology"/>
<evidence type="ECO:0000250" key="1"/>
<evidence type="ECO:0000255" key="2"/>
<evidence type="ECO:0000256" key="3">
    <source>
        <dbReference type="SAM" id="MobiDB-lite"/>
    </source>
</evidence>
<evidence type="ECO:0000305" key="4"/>
<accession>Q91C28</accession>
<accession>Q49AV0</accession>
<accession>Q8QPE3</accession>
<accession>Q8QPE4</accession>
<accession>Q8QPE5</accession>
<protein>
    <recommendedName>
        <fullName>Glycoprotein</fullName>
    </recommendedName>
</protein>
<feature type="signal peptide" evidence="2">
    <location>
        <begin position="1"/>
        <end position="19"/>
    </location>
</feature>
<feature type="chain" id="PRO_0000299098" description="Glycoprotein">
    <location>
        <begin position="20"/>
        <end position="533"/>
    </location>
</feature>
<feature type="topological domain" description="Virion surface" evidence="2">
    <location>
        <begin position="20"/>
        <end position="459"/>
    </location>
</feature>
<feature type="transmembrane region" description="Helical" evidence="2">
    <location>
        <begin position="460"/>
        <end position="480"/>
    </location>
</feature>
<feature type="topological domain" description="Intravirion" evidence="2">
    <location>
        <begin position="481"/>
        <end position="533"/>
    </location>
</feature>
<feature type="region of interest" description="Disordered" evidence="3">
    <location>
        <begin position="492"/>
        <end position="533"/>
    </location>
</feature>
<feature type="compositionally biased region" description="Polar residues" evidence="3">
    <location>
        <begin position="523"/>
        <end position="533"/>
    </location>
</feature>
<feature type="lipid moiety-binding region" description="S-palmitoyl cysteine; by host" evidence="1">
    <location>
        <position position="480"/>
    </location>
</feature>
<feature type="sequence variant" description="In strain: Isolate Bat/South Africa/Rv139.">
    <original>IVSNGR</original>
    <variation>MFPNGK</variation>
    <location>
        <begin position="172"/>
        <end position="177"/>
    </location>
</feature>
<feature type="sequence variant" description="In strain: Isolate Bat/Zimbabwe/Rv131 and Human/South Africa/Rv6.">
    <original>IVS</original>
    <variation>MFP</variation>
    <location>
        <begin position="172"/>
        <end position="174"/>
    </location>
</feature>
<organismHost>
    <name type="scientific">Homo sapiens</name>
    <name type="common">Human</name>
    <dbReference type="NCBI Taxonomy" id="9606"/>
</organismHost>
<organismHost>
    <name type="scientific">Mammalia</name>
    <dbReference type="NCBI Taxonomy" id="40674"/>
</organismHost>
<dbReference type="EMBL" id="AF298147">
    <property type="protein sequence ID" value="AAK97862.1"/>
    <property type="molecule type" value="Genomic_RNA"/>
</dbReference>
<dbReference type="EMBL" id="AY062055">
    <property type="protein sequence ID" value="AAL47595.2"/>
    <property type="molecule type" value="Genomic_RNA"/>
</dbReference>
<dbReference type="EMBL" id="AY062056">
    <property type="protein sequence ID" value="AAL47596.1"/>
    <property type="molecule type" value="Genomic_RNA"/>
</dbReference>
<dbReference type="EMBL" id="AY062057">
    <property type="protein sequence ID" value="AAL47597.2"/>
    <property type="molecule type" value="Genomic_RNA"/>
</dbReference>
<dbReference type="EMBL" id="AY996322">
    <property type="protein sequence ID" value="AAY53551.1"/>
    <property type="molecule type" value="Genomic_RNA"/>
</dbReference>
<dbReference type="SMR" id="Q91C28"/>
<dbReference type="GO" id="GO:0016020">
    <property type="term" value="C:membrane"/>
    <property type="evidence" value="ECO:0007669"/>
    <property type="project" value="UniProtKB-KW"/>
</dbReference>
<dbReference type="GO" id="GO:0019031">
    <property type="term" value="C:viral envelope"/>
    <property type="evidence" value="ECO:0007669"/>
    <property type="project" value="UniProtKB-KW"/>
</dbReference>
<dbReference type="GO" id="GO:0055036">
    <property type="term" value="C:virion membrane"/>
    <property type="evidence" value="ECO:0007669"/>
    <property type="project" value="UniProtKB-SubCell"/>
</dbReference>
<dbReference type="Gene3D" id="2.30.29.130">
    <property type="match status" value="1"/>
</dbReference>
<dbReference type="InterPro" id="IPR055448">
    <property type="entry name" value="PH_Rhabdo_glycop"/>
</dbReference>
<dbReference type="InterPro" id="IPR055447">
    <property type="entry name" value="Rhabdo_glycop_CD"/>
</dbReference>
<dbReference type="InterPro" id="IPR001903">
    <property type="entry name" value="Rhabdo_glycop_FD"/>
</dbReference>
<dbReference type="Pfam" id="PF24834">
    <property type="entry name" value="PH_Rhabdo_glycop"/>
    <property type="match status" value="1"/>
</dbReference>
<dbReference type="Pfam" id="PF24833">
    <property type="entry name" value="Rhabdo_glycop_CD"/>
    <property type="match status" value="1"/>
</dbReference>
<dbReference type="Pfam" id="PF00974">
    <property type="entry name" value="Rhabdo_glycop_FD"/>
    <property type="match status" value="1"/>
</dbReference>
<dbReference type="SUPFAM" id="SSF161008">
    <property type="entry name" value="Viral glycoprotein ectodomain-like"/>
    <property type="match status" value="1"/>
</dbReference>
<comment type="function">
    <text evidence="1">Attaches the virus to host cellular receptor, inducing endocytosis of the virion. In the endosome, the acidic pH induces conformational changes in the glycoprotein trimer, which trigger fusion between virus and cell membrane (By similarity).</text>
</comment>
<comment type="subunit">
    <text evidence="1">Homotrimer. Interacts with matrix protein (By similarity).</text>
</comment>
<comment type="subcellular location">
    <subcellularLocation>
        <location evidence="4">Virion membrane</location>
        <topology evidence="4">Single-pass type I membrane protein</topology>
    </subcellularLocation>
</comment>
<comment type="PTM">
    <text evidence="1">Glycosylated and palmitoylated by host. Glycosylation is crucial for glycoprotein export at the cell surface (By similarity).</text>
</comment>
<comment type="miscellaneous">
    <text evidence="1">Arg-352 is highly involved in rabies virus pathogenicity. Its mutation dramatically attenuates the virus (By similarity).</text>
</comment>
<comment type="similarity">
    <text evidence="4">Belongs to the lyssavirus glycoprotein family.</text>
</comment>